<sequence length="223" mass="23086">MPGCRISACGPGAQEGTAEPGSPPPPPREPLPSLQPPSPSPTSTPTPTKSPPLPEAAETPVEGQELQRWRQGASGGSGGAGPAGIAGAAAGAGGRALELAEARRRLLEVEGRRRLVSELESRVLQLHRVFLAAELRLAHRAESLSRLSGGVAQAELYLAAHGSRLKKGARRGRRGRPPALLASALGLGSCVPWGAGRLRRGQGPEPDSPFRRSPPRGPASPQR</sequence>
<dbReference type="EMBL" id="BC049168">
    <property type="protein sequence ID" value="AAH49168.1"/>
    <property type="molecule type" value="mRNA"/>
</dbReference>
<dbReference type="CCDS" id="CCDS38904.1"/>
<dbReference type="RefSeq" id="NP_001074625.1">
    <property type="nucleotide sequence ID" value="NM_001081156.2"/>
</dbReference>
<dbReference type="RefSeq" id="XP_006539218.1">
    <property type="nucleotide sequence ID" value="XM_006539155.4"/>
</dbReference>
<dbReference type="SMR" id="Q80ZI1"/>
<dbReference type="FunCoup" id="Q80ZI1">
    <property type="interactions" value="401"/>
</dbReference>
<dbReference type="IntAct" id="Q80ZI1">
    <property type="interactions" value="1"/>
</dbReference>
<dbReference type="STRING" id="10090.ENSMUSP00000129613"/>
<dbReference type="iPTMnet" id="Q80ZI1"/>
<dbReference type="PhosphoSitePlus" id="Q80ZI1"/>
<dbReference type="PaxDb" id="10090-ENSMUSP00000129613"/>
<dbReference type="ProteomicsDB" id="300124"/>
<dbReference type="Antibodypedia" id="68540">
    <property type="antibodies" value="30 antibodies from 8 providers"/>
</dbReference>
<dbReference type="Ensembl" id="ENSMUST00000125541.2">
    <property type="protein sequence ID" value="ENSMUSP00000129613.2"/>
    <property type="gene ID" value="ENSMUSG00000056596.9"/>
</dbReference>
<dbReference type="GeneID" id="69539"/>
<dbReference type="KEGG" id="mmu:69539"/>
<dbReference type="UCSC" id="uc008vcu.1">
    <property type="organism name" value="mouse"/>
</dbReference>
<dbReference type="AGR" id="MGI:1916789"/>
<dbReference type="CTD" id="388610"/>
<dbReference type="MGI" id="MGI:1916789">
    <property type="gene designation" value="Trnp1"/>
</dbReference>
<dbReference type="VEuPathDB" id="HostDB:ENSMUSG00000056596"/>
<dbReference type="eggNOG" id="ENOG502S7AN">
    <property type="taxonomic scope" value="Eukaryota"/>
</dbReference>
<dbReference type="GeneTree" id="ENSGT00390000017418"/>
<dbReference type="HOGENOM" id="CLU_106336_0_0_1"/>
<dbReference type="InParanoid" id="Q80ZI1"/>
<dbReference type="OMA" id="IACGAQQ"/>
<dbReference type="OrthoDB" id="9909452at2759"/>
<dbReference type="PhylomeDB" id="Q80ZI1"/>
<dbReference type="TreeFam" id="TF338814"/>
<dbReference type="BioGRID-ORCS" id="69539">
    <property type="hits" value="3 hits in 77 CRISPR screens"/>
</dbReference>
<dbReference type="CD-CODE" id="5E82D60E">
    <property type="entry name" value="Nucleolus"/>
</dbReference>
<dbReference type="ChiTaRS" id="Trnp1">
    <property type="organism name" value="mouse"/>
</dbReference>
<dbReference type="PRO" id="PR:Q80ZI1"/>
<dbReference type="Proteomes" id="UP000000589">
    <property type="component" value="Chromosome 4"/>
</dbReference>
<dbReference type="RNAct" id="Q80ZI1">
    <property type="molecule type" value="protein"/>
</dbReference>
<dbReference type="Bgee" id="ENSMUSG00000056596">
    <property type="expression patterns" value="Expressed in medial dorsal nucleus of thalamus and 196 other cell types or tissues"/>
</dbReference>
<dbReference type="GO" id="GO:0005634">
    <property type="term" value="C:nucleus"/>
    <property type="evidence" value="ECO:0000314"/>
    <property type="project" value="UniProtKB"/>
</dbReference>
<dbReference type="GO" id="GO:0003677">
    <property type="term" value="F:DNA binding"/>
    <property type="evidence" value="ECO:0000314"/>
    <property type="project" value="UniProtKB"/>
</dbReference>
<dbReference type="GO" id="GO:0021696">
    <property type="term" value="P:cerebellar cortex morphogenesis"/>
    <property type="evidence" value="ECO:0000315"/>
    <property type="project" value="UniProtKB"/>
</dbReference>
<dbReference type="GO" id="GO:0061351">
    <property type="term" value="P:neural precursor cell proliferation"/>
    <property type="evidence" value="ECO:0000315"/>
    <property type="project" value="UniProtKB"/>
</dbReference>
<dbReference type="GO" id="GO:0051726">
    <property type="term" value="P:regulation of cell cycle"/>
    <property type="evidence" value="ECO:0000315"/>
    <property type="project" value="UniProtKB"/>
</dbReference>
<dbReference type="GO" id="GO:0042127">
    <property type="term" value="P:regulation of cell population proliferation"/>
    <property type="evidence" value="ECO:0000315"/>
    <property type="project" value="UniProtKB"/>
</dbReference>
<dbReference type="InterPro" id="IPR040266">
    <property type="entry name" value="TRNP1"/>
</dbReference>
<dbReference type="PANTHER" id="PTHR40714">
    <property type="entry name" value="TMF-REGULATED NUCLEAR PROTEIN 1"/>
    <property type="match status" value="1"/>
</dbReference>
<dbReference type="PANTHER" id="PTHR40714:SF1">
    <property type="entry name" value="TMF-REGULATED NUCLEAR PROTEIN 1"/>
    <property type="match status" value="1"/>
</dbReference>
<protein>
    <recommendedName>
        <fullName>TMF-regulated nuclear protein 1</fullName>
    </recommendedName>
</protein>
<reference key="1">
    <citation type="journal article" date="2004" name="Genome Res.">
        <title>The status, quality, and expansion of the NIH full-length cDNA project: the Mammalian Gene Collection (MGC).</title>
        <authorList>
            <consortium name="The MGC Project Team"/>
        </authorList>
    </citation>
    <scope>NUCLEOTIDE SEQUENCE [LARGE SCALE MRNA]</scope>
    <source>
        <tissue>Eye</tissue>
    </source>
</reference>
<reference key="2">
    <citation type="journal article" date="2006" name="DNA Cell Biol.">
        <title>TRNP: a conserved mammalian gene encoding a nuclear protein that accelerates cell-cycle progression.</title>
        <authorList>
            <person name="Volpe M."/>
            <person name="Shpungin S."/>
            <person name="Barbi C."/>
            <person name="Abrham G."/>
            <person name="Malovani H."/>
            <person name="Wides R."/>
            <person name="Nir U."/>
        </authorList>
    </citation>
    <scope>FUNCTION</scope>
    <scope>INTERACTION WITH TMF1</scope>
    <scope>UBIQUITINATION</scope>
    <scope>TISSUE SPECIFICITY</scope>
</reference>
<reference key="3">
    <citation type="journal article" date="2013" name="Cell">
        <title>Trnp1 regulates expansion and folding of the mammalian cerebral cortex by control of radial glial fate.</title>
        <authorList>
            <person name="Stahl R."/>
            <person name="Walcher T."/>
            <person name="De Juan Romero C."/>
            <person name="Pilz G.A."/>
            <person name="Cappello S."/>
            <person name="Irmler M."/>
            <person name="Sanz-Aquela J.M."/>
            <person name="Beckers J."/>
            <person name="Blum R."/>
            <person name="Borrell V."/>
            <person name="Goetz M."/>
        </authorList>
    </citation>
    <scope>FUNCTION IN CEREBRAL CORTEX EXPANSION</scope>
    <scope>DNA-BINDING</scope>
    <scope>SUBCELLULAR LOCATION</scope>
    <scope>TISSUE SPECIFICITY</scope>
    <scope>DEVELOPMENTAL STAGE</scope>
</reference>
<feature type="chain" id="PRO_0000336089" description="TMF-regulated nuclear protein 1">
    <location>
        <begin position="1"/>
        <end position="223"/>
    </location>
</feature>
<feature type="region of interest" description="Disordered" evidence="1">
    <location>
        <begin position="1"/>
        <end position="84"/>
    </location>
</feature>
<feature type="region of interest" description="Disordered" evidence="1">
    <location>
        <begin position="196"/>
        <end position="223"/>
    </location>
</feature>
<feature type="compositionally biased region" description="Pro residues" evidence="1">
    <location>
        <begin position="21"/>
        <end position="54"/>
    </location>
</feature>
<feature type="compositionally biased region" description="Gly residues" evidence="1">
    <location>
        <begin position="73"/>
        <end position="84"/>
    </location>
</feature>
<accession>Q80ZI1</accession>
<name>TRNP1_MOUSE</name>
<comment type="function">
    <text evidence="2 3">DNA-binding factor that regulates the expression of a subset of genes and plays a key role in tangential, radial, and lateral expansion of the brain neocortex. Regulates neural stem cells proliferation and the production of intermediate neural progenitors and basal radial glial cells affecting the process of cerebral cortex gyrification. May control the proliferation rate of cells by regulating their progression through key cell-cycle transition points.</text>
</comment>
<comment type="subunit">
    <text evidence="2">Interacts with TMF1; may regulate TRNP1 proteasomal degradation.</text>
</comment>
<comment type="subcellular location">
    <subcellularLocation>
        <location evidence="3">Nucleus</location>
    </subcellularLocation>
</comment>
<comment type="tissue specificity">
    <text evidence="2 3">Expressed in brain and kidney (at protein level). Also detected in spleen and intestine.</text>
</comment>
<comment type="developmental stage">
    <text evidence="3">Expression is highly restricted to the phase of neurogenesis with high levels in all cells in the ventricular zone (VZ) at 10 dpc. Expression disappears at the end of neurogenesis (18 dpc). However, it remains present in a specific adult neurogenic region with the highest amplification and neuronal output, the subependymal zone of the lateral ventricle from where newborn neurons migrate to the olfactory bulb (at protein level).</text>
</comment>
<comment type="PTM">
    <text evidence="2">Ubiquitinated, leading to its degradation by the proteasome.</text>
</comment>
<comment type="online information" name="Protein Spotlight">
    <link uri="https://www.proteinspotlight.org/back_issues/152/"/>
    <text>the geometry of intelligence - Issue 152 of August 2013</text>
</comment>
<organism>
    <name type="scientific">Mus musculus</name>
    <name type="common">Mouse</name>
    <dbReference type="NCBI Taxonomy" id="10090"/>
    <lineage>
        <taxon>Eukaryota</taxon>
        <taxon>Metazoa</taxon>
        <taxon>Chordata</taxon>
        <taxon>Craniata</taxon>
        <taxon>Vertebrata</taxon>
        <taxon>Euteleostomi</taxon>
        <taxon>Mammalia</taxon>
        <taxon>Eutheria</taxon>
        <taxon>Euarchontoglires</taxon>
        <taxon>Glires</taxon>
        <taxon>Rodentia</taxon>
        <taxon>Myomorpha</taxon>
        <taxon>Muroidea</taxon>
        <taxon>Muridae</taxon>
        <taxon>Murinae</taxon>
        <taxon>Mus</taxon>
        <taxon>Mus</taxon>
    </lineage>
</organism>
<keyword id="KW-0131">Cell cycle</keyword>
<keyword id="KW-0217">Developmental protein</keyword>
<keyword id="KW-0238">DNA-binding</keyword>
<keyword id="KW-0524">Neurogenesis</keyword>
<keyword id="KW-0539">Nucleus</keyword>
<keyword id="KW-1185">Reference proteome</keyword>
<keyword id="KW-0804">Transcription</keyword>
<keyword id="KW-0805">Transcription regulation</keyword>
<keyword id="KW-0832">Ubl conjugation</keyword>
<proteinExistence type="evidence at protein level"/>
<evidence type="ECO:0000256" key="1">
    <source>
        <dbReference type="SAM" id="MobiDB-lite"/>
    </source>
</evidence>
<evidence type="ECO:0000269" key="2">
    <source>
    </source>
</evidence>
<evidence type="ECO:0000269" key="3">
    <source>
    </source>
</evidence>
<gene>
    <name type="primary">Trnp1</name>
    <name type="synonym">Trnp</name>
</gene>